<keyword id="KW-0053">Apoptosis</keyword>
<keyword id="KW-0175">Coiled coil</keyword>
<keyword id="KW-1017">Isopeptide bond</keyword>
<keyword id="KW-0597">Phosphoprotein</keyword>
<keyword id="KW-1185">Reference proteome</keyword>
<keyword id="KW-0832">Ubl conjugation</keyword>
<proteinExistence type="evidence at transcript level"/>
<comment type="function">
    <text evidence="1">Anti-apoptotic protein that modulates a caspase-10 dependent mitochondrial caspase-3/9 feedback amplification loop.</text>
</comment>
<evidence type="ECO:0000250" key="1"/>
<evidence type="ECO:0000250" key="2">
    <source>
        <dbReference type="UniProtKB" id="Q9H8G2"/>
    </source>
</evidence>
<evidence type="ECO:0000255" key="3"/>
<evidence type="ECO:0000256" key="4">
    <source>
        <dbReference type="SAM" id="MobiDB-lite"/>
    </source>
</evidence>
<protein>
    <recommendedName>
        <fullName>Caspase activity and apoptosis inhibitor 1</fullName>
    </recommendedName>
    <alternativeName>
        <fullName>Conserved anti-apoptotic protein</fullName>
        <shortName>CAAP</shortName>
    </alternativeName>
</protein>
<reference key="1">
    <citation type="submission" date="2005-12" db="EMBL/GenBank/DDBJ databases">
        <authorList>
            <consortium name="NIH - Mammalian Gene Collection (MGC) project"/>
        </authorList>
    </citation>
    <scope>NUCLEOTIDE SEQUENCE [LARGE SCALE MRNA]</scope>
    <source>
        <strain>Crossbred X Angus</strain>
        <tissue>Liver</tissue>
    </source>
</reference>
<feature type="chain" id="PRO_0000285783" description="Caspase activity and apoptosis inhibitor 1">
    <location>
        <begin position="1"/>
        <end position="362"/>
    </location>
</feature>
<feature type="region of interest" description="Disordered" evidence="4">
    <location>
        <begin position="1"/>
        <end position="44"/>
    </location>
</feature>
<feature type="region of interest" description="Disordered" evidence="4">
    <location>
        <begin position="65"/>
        <end position="101"/>
    </location>
</feature>
<feature type="region of interest" description="Disordered" evidence="4">
    <location>
        <begin position="226"/>
        <end position="251"/>
    </location>
</feature>
<feature type="region of interest" description="Disordered" evidence="4">
    <location>
        <begin position="269"/>
        <end position="291"/>
    </location>
</feature>
<feature type="region of interest" description="Disordered" evidence="4">
    <location>
        <begin position="309"/>
        <end position="332"/>
    </location>
</feature>
<feature type="coiled-coil region" evidence="3">
    <location>
        <begin position="282"/>
        <end position="312"/>
    </location>
</feature>
<feature type="compositionally biased region" description="Basic residues" evidence="4">
    <location>
        <begin position="1"/>
        <end position="14"/>
    </location>
</feature>
<feature type="compositionally biased region" description="Low complexity" evidence="4">
    <location>
        <begin position="19"/>
        <end position="32"/>
    </location>
</feature>
<feature type="compositionally biased region" description="Gly residues" evidence="4">
    <location>
        <begin position="33"/>
        <end position="44"/>
    </location>
</feature>
<feature type="compositionally biased region" description="Gly residues" evidence="4">
    <location>
        <begin position="65"/>
        <end position="74"/>
    </location>
</feature>
<feature type="compositionally biased region" description="Basic and acidic residues" evidence="4">
    <location>
        <begin position="235"/>
        <end position="251"/>
    </location>
</feature>
<feature type="compositionally biased region" description="Low complexity" evidence="4">
    <location>
        <begin position="273"/>
        <end position="282"/>
    </location>
</feature>
<feature type="modified residue" description="Phosphoserine" evidence="2">
    <location>
        <position position="89"/>
    </location>
</feature>
<feature type="modified residue" description="Phosphothreonine" evidence="2">
    <location>
        <position position="90"/>
    </location>
</feature>
<feature type="modified residue" description="Phosphoserine" evidence="2">
    <location>
        <position position="121"/>
    </location>
</feature>
<feature type="modified residue" description="Phosphoserine" evidence="2">
    <location>
        <position position="204"/>
    </location>
</feature>
<feature type="modified residue" description="Phosphoserine" evidence="2">
    <location>
        <position position="313"/>
    </location>
</feature>
<feature type="cross-link" description="Glycyl lysine isopeptide (Lys-Gly) (interchain with G-Cter in SUMO2)" evidence="2">
    <location>
        <position position="105"/>
    </location>
</feature>
<dbReference type="EMBL" id="BC111229">
    <property type="protein sequence ID" value="AAI11230.1"/>
    <property type="molecule type" value="mRNA"/>
</dbReference>
<dbReference type="RefSeq" id="NP_001033209.1">
    <property type="nucleotide sequence ID" value="NM_001038120.1"/>
</dbReference>
<dbReference type="FunCoup" id="Q2T9W9">
    <property type="interactions" value="1617"/>
</dbReference>
<dbReference type="STRING" id="9913.ENSBTAP00000001617"/>
<dbReference type="PaxDb" id="9913-ENSBTAP00000001617"/>
<dbReference type="Ensembl" id="ENSBTAT00000001617.7">
    <property type="protein sequence ID" value="ENSBTAP00000001617.5"/>
    <property type="gene ID" value="ENSBTAG00000001223.7"/>
</dbReference>
<dbReference type="GeneID" id="515858"/>
<dbReference type="KEGG" id="bta:515858"/>
<dbReference type="CTD" id="79886"/>
<dbReference type="VEuPathDB" id="HostDB:ENSBTAG00000001223"/>
<dbReference type="VGNC" id="VGNC:26660">
    <property type="gene designation" value="CAAP1"/>
</dbReference>
<dbReference type="eggNOG" id="ENOG502RN9N">
    <property type="taxonomic scope" value="Eukaryota"/>
</dbReference>
<dbReference type="GeneTree" id="ENSGT00390000017010"/>
<dbReference type="HOGENOM" id="CLU_078683_0_0_1"/>
<dbReference type="InParanoid" id="Q2T9W9"/>
<dbReference type="OMA" id="QVPEKKD"/>
<dbReference type="OrthoDB" id="10064012at2759"/>
<dbReference type="TreeFam" id="TF332850"/>
<dbReference type="Proteomes" id="UP000009136">
    <property type="component" value="Chromosome 8"/>
</dbReference>
<dbReference type="Bgee" id="ENSBTAG00000001223">
    <property type="expression patterns" value="Expressed in occipital lobe and 106 other cell types or tissues"/>
</dbReference>
<dbReference type="GO" id="GO:0006915">
    <property type="term" value="P:apoptotic process"/>
    <property type="evidence" value="ECO:0007669"/>
    <property type="project" value="UniProtKB-KW"/>
</dbReference>
<dbReference type="GO" id="GO:0043066">
    <property type="term" value="P:negative regulation of apoptotic process"/>
    <property type="evidence" value="ECO:0000250"/>
    <property type="project" value="UniProtKB"/>
</dbReference>
<dbReference type="InterPro" id="IPR038991">
    <property type="entry name" value="CAAP1"/>
</dbReference>
<dbReference type="PANTHER" id="PTHR14740">
    <property type="entry name" value="CASPASE ACTIVITY AND APOPTOSIS INHIBITOR 1"/>
    <property type="match status" value="1"/>
</dbReference>
<dbReference type="PANTHER" id="PTHR14740:SF3">
    <property type="entry name" value="CASPASE ACTIVITY AND APOPTOSIS INHIBITOR 1"/>
    <property type="match status" value="1"/>
</dbReference>
<dbReference type="Pfam" id="PF15335">
    <property type="entry name" value="CAAP1"/>
    <property type="match status" value="1"/>
</dbReference>
<name>CAAP1_BOVIN</name>
<organism>
    <name type="scientific">Bos taurus</name>
    <name type="common">Bovine</name>
    <dbReference type="NCBI Taxonomy" id="9913"/>
    <lineage>
        <taxon>Eukaryota</taxon>
        <taxon>Metazoa</taxon>
        <taxon>Chordata</taxon>
        <taxon>Craniata</taxon>
        <taxon>Vertebrata</taxon>
        <taxon>Euteleostomi</taxon>
        <taxon>Mammalia</taxon>
        <taxon>Eutheria</taxon>
        <taxon>Laurasiatheria</taxon>
        <taxon>Artiodactyla</taxon>
        <taxon>Ruminantia</taxon>
        <taxon>Pecora</taxon>
        <taxon>Bovidae</taxon>
        <taxon>Bovinae</taxon>
        <taxon>Bos</taxon>
    </lineage>
</organism>
<gene>
    <name type="primary">CAAP1</name>
    <name type="synonym">CAAP</name>
</gene>
<sequence length="362" mass="38487">MTGKKSSREKRRKRSGQEAAAALAAPDLVPAVGGSGSGSTSGCGSASGCGSVTCCGNTSVSGSVTGGGSGGSCWGGSSVERGERRKRRSTDSSSSVSGSLQQEAKYLLPPLEKELFLAEHSDLEEGGLDLTVALKPVSFYISDKKEMLRQCFCIIGEKKLQKMLPDVLKNCSIEEIKRLCQEQLELLSEKKILKILEGDNGMDSEMEEEADDGSKMVSDVVNQQDSCVDSTSSLRENKQPEGLELKQGKGEDSDVLSINADAYDSDIEGPCNEEAAAPEVPENTVQSEAGQIDDLEKDIEKSVNEILGLAESSPKEPKAATLTVPPPEDVQPSAQQLELLELEMRARAIKALMKAGDIKKPA</sequence>
<accession>Q2T9W9</accession>